<accession>Q54DD3</accession>
<gene>
    <name type="primary">gcvT</name>
    <name type="ORF">DDB_G0292326</name>
</gene>
<sequence>MISQNIIKIIQKSNKRYFSSSNELKKTALNELHKELGAKMVPFCGWEMPVQYPAGVMKEHLHVRKESGLFDVSHMGQLRIHGKDRVKFFESIVVADLQALPTGHSKLSVFTNEKGGIIDDTMITNAGDSLYVVVNAGCADKDISHINEKIKEFKSVNPTHDVSMQLLEDLSLIAIQGPTTESILQKFVKDQDITNMEFMTQRPMTIAGIDCIVTRCGYTGEDGFEISVPSKQAVRLAELFLATSNASIESGIKPAGLGARDSLRLEAGLCLYGHDLNDDITPIEASLNWLISKRRREEGGFPGASIIQKQLQKDGCPQKRVGVIINGAPAREGCLILDPSTNQEIGKVTSGTISPITRQSISMAYVKTPFSKIGTQVNVSIRGKPITATISKMPFVPTNYKKL</sequence>
<keyword id="KW-0032">Aminotransferase</keyword>
<keyword id="KW-0496">Mitochondrion</keyword>
<keyword id="KW-1185">Reference proteome</keyword>
<keyword id="KW-0808">Transferase</keyword>
<keyword id="KW-0809">Transit peptide</keyword>
<dbReference type="EC" id="2.1.2.10"/>
<dbReference type="EMBL" id="AAFI02000189">
    <property type="protein sequence ID" value="EAL61287.1"/>
    <property type="molecule type" value="Genomic_DNA"/>
</dbReference>
<dbReference type="RefSeq" id="XP_629708.1">
    <property type="nucleotide sequence ID" value="XM_629706.1"/>
</dbReference>
<dbReference type="SMR" id="Q54DD3"/>
<dbReference type="FunCoup" id="Q54DD3">
    <property type="interactions" value="328"/>
</dbReference>
<dbReference type="STRING" id="44689.Q54DD3"/>
<dbReference type="PaxDb" id="44689-DDB0231218"/>
<dbReference type="EnsemblProtists" id="EAL61287">
    <property type="protein sequence ID" value="EAL61287"/>
    <property type="gene ID" value="DDB_G0292326"/>
</dbReference>
<dbReference type="GeneID" id="8628622"/>
<dbReference type="KEGG" id="ddi:DDB_G0292326"/>
<dbReference type="dictyBase" id="DDB_G0292326">
    <property type="gene designation" value="gcvT"/>
</dbReference>
<dbReference type="VEuPathDB" id="AmoebaDB:DDB_G0292326"/>
<dbReference type="eggNOG" id="KOG2770">
    <property type="taxonomic scope" value="Eukaryota"/>
</dbReference>
<dbReference type="HOGENOM" id="CLU_007884_10_0_1"/>
<dbReference type="InParanoid" id="Q54DD3"/>
<dbReference type="OMA" id="MPVQYPA"/>
<dbReference type="PhylomeDB" id="Q54DD3"/>
<dbReference type="Reactome" id="R-DDI-6783984">
    <property type="pathway name" value="Glycine degradation"/>
</dbReference>
<dbReference type="PRO" id="PR:Q54DD3"/>
<dbReference type="Proteomes" id="UP000002195">
    <property type="component" value="Chromosome 6"/>
</dbReference>
<dbReference type="GO" id="GO:0005960">
    <property type="term" value="C:glycine cleavage complex"/>
    <property type="evidence" value="ECO:0007669"/>
    <property type="project" value="InterPro"/>
</dbReference>
<dbReference type="GO" id="GO:0005739">
    <property type="term" value="C:mitochondrion"/>
    <property type="evidence" value="ECO:0000318"/>
    <property type="project" value="GO_Central"/>
</dbReference>
<dbReference type="GO" id="GO:0004047">
    <property type="term" value="F:aminomethyltransferase activity"/>
    <property type="evidence" value="ECO:0007669"/>
    <property type="project" value="UniProtKB-EC"/>
</dbReference>
<dbReference type="GO" id="GO:0008483">
    <property type="term" value="F:transaminase activity"/>
    <property type="evidence" value="ECO:0007669"/>
    <property type="project" value="UniProtKB-KW"/>
</dbReference>
<dbReference type="GO" id="GO:0006546">
    <property type="term" value="P:glycine catabolic process"/>
    <property type="evidence" value="ECO:0007669"/>
    <property type="project" value="InterPro"/>
</dbReference>
<dbReference type="FunFam" id="3.30.70.1400:FF:000001">
    <property type="entry name" value="Aminomethyltransferase"/>
    <property type="match status" value="1"/>
</dbReference>
<dbReference type="FunFam" id="4.10.1250.10:FF:000002">
    <property type="entry name" value="Aminomethyltransferase"/>
    <property type="match status" value="1"/>
</dbReference>
<dbReference type="Gene3D" id="2.40.30.110">
    <property type="entry name" value="Aminomethyltransferase beta-barrel domains"/>
    <property type="match status" value="1"/>
</dbReference>
<dbReference type="Gene3D" id="3.30.70.1400">
    <property type="entry name" value="Aminomethyltransferase beta-barrel domains"/>
    <property type="match status" value="1"/>
</dbReference>
<dbReference type="Gene3D" id="4.10.1250.10">
    <property type="entry name" value="Aminomethyltransferase fragment"/>
    <property type="match status" value="1"/>
</dbReference>
<dbReference type="Gene3D" id="3.30.1360.120">
    <property type="entry name" value="Probable tRNA modification gtpase trme, domain 1"/>
    <property type="match status" value="1"/>
</dbReference>
<dbReference type="InterPro" id="IPR006223">
    <property type="entry name" value="GCS_T"/>
</dbReference>
<dbReference type="InterPro" id="IPR013977">
    <property type="entry name" value="GCST_C"/>
</dbReference>
<dbReference type="InterPro" id="IPR006222">
    <property type="entry name" value="GCV_T_N"/>
</dbReference>
<dbReference type="InterPro" id="IPR028896">
    <property type="entry name" value="GcvT/YgfZ/DmdA"/>
</dbReference>
<dbReference type="InterPro" id="IPR029043">
    <property type="entry name" value="GcvT/YgfZ_C"/>
</dbReference>
<dbReference type="InterPro" id="IPR027266">
    <property type="entry name" value="TrmE/GcvT_dom1"/>
</dbReference>
<dbReference type="NCBIfam" id="TIGR00528">
    <property type="entry name" value="gcvT"/>
    <property type="match status" value="1"/>
</dbReference>
<dbReference type="NCBIfam" id="NF001567">
    <property type="entry name" value="PRK00389.1"/>
    <property type="match status" value="1"/>
</dbReference>
<dbReference type="PANTHER" id="PTHR43757">
    <property type="entry name" value="AMINOMETHYLTRANSFERASE"/>
    <property type="match status" value="1"/>
</dbReference>
<dbReference type="PANTHER" id="PTHR43757:SF2">
    <property type="entry name" value="AMINOMETHYLTRANSFERASE, MITOCHONDRIAL"/>
    <property type="match status" value="1"/>
</dbReference>
<dbReference type="Pfam" id="PF01571">
    <property type="entry name" value="GCV_T"/>
    <property type="match status" value="1"/>
</dbReference>
<dbReference type="Pfam" id="PF08669">
    <property type="entry name" value="GCV_T_C"/>
    <property type="match status" value="1"/>
</dbReference>
<dbReference type="PIRSF" id="PIRSF006487">
    <property type="entry name" value="GcvT"/>
    <property type="match status" value="1"/>
</dbReference>
<dbReference type="SUPFAM" id="SSF101790">
    <property type="entry name" value="Aminomethyltransferase beta-barrel domain"/>
    <property type="match status" value="1"/>
</dbReference>
<dbReference type="SUPFAM" id="SSF103025">
    <property type="entry name" value="Folate-binding domain"/>
    <property type="match status" value="1"/>
</dbReference>
<organism>
    <name type="scientific">Dictyostelium discoideum</name>
    <name type="common">Social amoeba</name>
    <dbReference type="NCBI Taxonomy" id="44689"/>
    <lineage>
        <taxon>Eukaryota</taxon>
        <taxon>Amoebozoa</taxon>
        <taxon>Evosea</taxon>
        <taxon>Eumycetozoa</taxon>
        <taxon>Dictyostelia</taxon>
        <taxon>Dictyosteliales</taxon>
        <taxon>Dictyosteliaceae</taxon>
        <taxon>Dictyostelium</taxon>
    </lineage>
</organism>
<proteinExistence type="inferred from homology"/>
<comment type="function">
    <text evidence="1">The glycine cleavage system catalyzes the degradation of glycine.</text>
</comment>
<comment type="catalytic activity">
    <reaction>
        <text>N(6)-[(R)-S(8)-aminomethyldihydrolipoyl]-L-lysyl-[protein] + (6S)-5,6,7,8-tetrahydrofolate = N(6)-[(R)-dihydrolipoyl]-L-lysyl-[protein] + (6R)-5,10-methylene-5,6,7,8-tetrahydrofolate + NH4(+)</text>
        <dbReference type="Rhea" id="RHEA:16945"/>
        <dbReference type="Rhea" id="RHEA-COMP:10475"/>
        <dbReference type="Rhea" id="RHEA-COMP:10492"/>
        <dbReference type="ChEBI" id="CHEBI:15636"/>
        <dbReference type="ChEBI" id="CHEBI:28938"/>
        <dbReference type="ChEBI" id="CHEBI:57453"/>
        <dbReference type="ChEBI" id="CHEBI:83100"/>
        <dbReference type="ChEBI" id="CHEBI:83143"/>
        <dbReference type="EC" id="2.1.2.10"/>
    </reaction>
</comment>
<comment type="subunit">
    <text evidence="1">The glycine cleavage system is composed of four proteins: P, T, L and H.</text>
</comment>
<comment type="subcellular location">
    <subcellularLocation>
        <location evidence="1">Mitochondrion</location>
    </subcellularLocation>
</comment>
<comment type="similarity">
    <text evidence="3">Belongs to the GcvT family.</text>
</comment>
<protein>
    <recommendedName>
        <fullName>Aminomethyltransferase, mitochondrial</fullName>
        <ecNumber>2.1.2.10</ecNumber>
    </recommendedName>
    <alternativeName>
        <fullName>Glycine cleavage system T protein</fullName>
        <shortName>GCVT</shortName>
    </alternativeName>
</protein>
<reference key="1">
    <citation type="journal article" date="2005" name="Nature">
        <title>The genome of the social amoeba Dictyostelium discoideum.</title>
        <authorList>
            <person name="Eichinger L."/>
            <person name="Pachebat J.A."/>
            <person name="Gloeckner G."/>
            <person name="Rajandream M.A."/>
            <person name="Sucgang R."/>
            <person name="Berriman M."/>
            <person name="Song J."/>
            <person name="Olsen R."/>
            <person name="Szafranski K."/>
            <person name="Xu Q."/>
            <person name="Tunggal B."/>
            <person name="Kummerfeld S."/>
            <person name="Madera M."/>
            <person name="Konfortov B.A."/>
            <person name="Rivero F."/>
            <person name="Bankier A.T."/>
            <person name="Lehmann R."/>
            <person name="Hamlin N."/>
            <person name="Davies R."/>
            <person name="Gaudet P."/>
            <person name="Fey P."/>
            <person name="Pilcher K."/>
            <person name="Chen G."/>
            <person name="Saunders D."/>
            <person name="Sodergren E.J."/>
            <person name="Davis P."/>
            <person name="Kerhornou A."/>
            <person name="Nie X."/>
            <person name="Hall N."/>
            <person name="Anjard C."/>
            <person name="Hemphill L."/>
            <person name="Bason N."/>
            <person name="Farbrother P."/>
            <person name="Desany B."/>
            <person name="Just E."/>
            <person name="Morio T."/>
            <person name="Rost R."/>
            <person name="Churcher C.M."/>
            <person name="Cooper J."/>
            <person name="Haydock S."/>
            <person name="van Driessche N."/>
            <person name="Cronin A."/>
            <person name="Goodhead I."/>
            <person name="Muzny D.M."/>
            <person name="Mourier T."/>
            <person name="Pain A."/>
            <person name="Lu M."/>
            <person name="Harper D."/>
            <person name="Lindsay R."/>
            <person name="Hauser H."/>
            <person name="James K.D."/>
            <person name="Quiles M."/>
            <person name="Madan Babu M."/>
            <person name="Saito T."/>
            <person name="Buchrieser C."/>
            <person name="Wardroper A."/>
            <person name="Felder M."/>
            <person name="Thangavelu M."/>
            <person name="Johnson D."/>
            <person name="Knights A."/>
            <person name="Loulseged H."/>
            <person name="Mungall K.L."/>
            <person name="Oliver K."/>
            <person name="Price C."/>
            <person name="Quail M.A."/>
            <person name="Urushihara H."/>
            <person name="Hernandez J."/>
            <person name="Rabbinowitsch E."/>
            <person name="Steffen D."/>
            <person name="Sanders M."/>
            <person name="Ma J."/>
            <person name="Kohara Y."/>
            <person name="Sharp S."/>
            <person name="Simmonds M.N."/>
            <person name="Spiegler S."/>
            <person name="Tivey A."/>
            <person name="Sugano S."/>
            <person name="White B."/>
            <person name="Walker D."/>
            <person name="Woodward J.R."/>
            <person name="Winckler T."/>
            <person name="Tanaka Y."/>
            <person name="Shaulsky G."/>
            <person name="Schleicher M."/>
            <person name="Weinstock G.M."/>
            <person name="Rosenthal A."/>
            <person name="Cox E.C."/>
            <person name="Chisholm R.L."/>
            <person name="Gibbs R.A."/>
            <person name="Loomis W.F."/>
            <person name="Platzer M."/>
            <person name="Kay R.R."/>
            <person name="Williams J.G."/>
            <person name="Dear P.H."/>
            <person name="Noegel A.A."/>
            <person name="Barrell B.G."/>
            <person name="Kuspa A."/>
        </authorList>
    </citation>
    <scope>NUCLEOTIDE SEQUENCE [LARGE SCALE GENOMIC DNA]</scope>
    <source>
        <strain>AX4</strain>
    </source>
</reference>
<evidence type="ECO:0000250" key="1"/>
<evidence type="ECO:0000255" key="2"/>
<evidence type="ECO:0000305" key="3"/>
<name>GCST_DICDI</name>
<feature type="transit peptide" description="Mitochondrion" evidence="2">
    <location>
        <begin position="1"/>
        <end position="25"/>
    </location>
</feature>
<feature type="chain" id="PRO_0000327652" description="Aminomethyltransferase, mitochondrial">
    <location>
        <begin position="26"/>
        <end position="403"/>
    </location>
</feature>
<feature type="binding site" evidence="1">
    <location>
        <position position="225"/>
    </location>
    <ligand>
        <name>substrate</name>
    </ligand>
</feature>
<feature type="binding site" evidence="1">
    <location>
        <position position="260"/>
    </location>
    <ligand>
        <name>substrate</name>
    </ligand>
</feature>
<feature type="binding site" evidence="1">
    <location>
        <position position="400"/>
    </location>
    <ligand>
        <name>substrate</name>
    </ligand>
</feature>